<dbReference type="EC" id="6.3.4.5" evidence="1"/>
<dbReference type="EMBL" id="BX571965">
    <property type="protein sequence ID" value="CAH35720.1"/>
    <property type="molecule type" value="Genomic_DNA"/>
</dbReference>
<dbReference type="RefSeq" id="WP_004521517.1">
    <property type="nucleotide sequence ID" value="NZ_CP009538.1"/>
</dbReference>
<dbReference type="RefSeq" id="YP_108321.1">
    <property type="nucleotide sequence ID" value="NC_006350.1"/>
</dbReference>
<dbReference type="SMR" id="Q63U95"/>
<dbReference type="STRING" id="272560.BPSL1721"/>
<dbReference type="KEGG" id="bps:BPSL1721"/>
<dbReference type="PATRIC" id="fig|272560.51.peg.3814"/>
<dbReference type="eggNOG" id="COG0137">
    <property type="taxonomic scope" value="Bacteria"/>
</dbReference>
<dbReference type="UniPathway" id="UPA00068">
    <property type="reaction ID" value="UER00113"/>
</dbReference>
<dbReference type="Proteomes" id="UP000000605">
    <property type="component" value="Chromosome 1"/>
</dbReference>
<dbReference type="GO" id="GO:0005737">
    <property type="term" value="C:cytoplasm"/>
    <property type="evidence" value="ECO:0007669"/>
    <property type="project" value="UniProtKB-SubCell"/>
</dbReference>
<dbReference type="GO" id="GO:0004055">
    <property type="term" value="F:argininosuccinate synthase activity"/>
    <property type="evidence" value="ECO:0007669"/>
    <property type="project" value="UniProtKB-UniRule"/>
</dbReference>
<dbReference type="GO" id="GO:0005524">
    <property type="term" value="F:ATP binding"/>
    <property type="evidence" value="ECO:0007669"/>
    <property type="project" value="UniProtKB-UniRule"/>
</dbReference>
<dbReference type="GO" id="GO:0000053">
    <property type="term" value="P:argininosuccinate metabolic process"/>
    <property type="evidence" value="ECO:0007669"/>
    <property type="project" value="TreeGrafter"/>
</dbReference>
<dbReference type="GO" id="GO:0006526">
    <property type="term" value="P:L-arginine biosynthetic process"/>
    <property type="evidence" value="ECO:0007669"/>
    <property type="project" value="UniProtKB-UniRule"/>
</dbReference>
<dbReference type="GO" id="GO:0000050">
    <property type="term" value="P:urea cycle"/>
    <property type="evidence" value="ECO:0007669"/>
    <property type="project" value="TreeGrafter"/>
</dbReference>
<dbReference type="CDD" id="cd01999">
    <property type="entry name" value="ASS"/>
    <property type="match status" value="1"/>
</dbReference>
<dbReference type="FunFam" id="3.40.50.620:FF:000019">
    <property type="entry name" value="Argininosuccinate synthase"/>
    <property type="match status" value="1"/>
</dbReference>
<dbReference type="FunFam" id="3.90.1260.10:FF:000007">
    <property type="entry name" value="Argininosuccinate synthase"/>
    <property type="match status" value="1"/>
</dbReference>
<dbReference type="Gene3D" id="3.90.1260.10">
    <property type="entry name" value="Argininosuccinate synthetase, chain A, domain 2"/>
    <property type="match status" value="1"/>
</dbReference>
<dbReference type="Gene3D" id="3.40.50.620">
    <property type="entry name" value="HUPs"/>
    <property type="match status" value="1"/>
</dbReference>
<dbReference type="HAMAP" id="MF_00005">
    <property type="entry name" value="Arg_succ_synth_type1"/>
    <property type="match status" value="1"/>
</dbReference>
<dbReference type="InterPro" id="IPR048268">
    <property type="entry name" value="Arginosuc_syn_C"/>
</dbReference>
<dbReference type="InterPro" id="IPR048267">
    <property type="entry name" value="Arginosuc_syn_N"/>
</dbReference>
<dbReference type="InterPro" id="IPR001518">
    <property type="entry name" value="Arginosuc_synth"/>
</dbReference>
<dbReference type="InterPro" id="IPR018223">
    <property type="entry name" value="Arginosuc_synth_CS"/>
</dbReference>
<dbReference type="InterPro" id="IPR023434">
    <property type="entry name" value="Arginosuc_synth_type_1_subfam"/>
</dbReference>
<dbReference type="InterPro" id="IPR024074">
    <property type="entry name" value="AS_cat/multimer_dom_body"/>
</dbReference>
<dbReference type="InterPro" id="IPR014729">
    <property type="entry name" value="Rossmann-like_a/b/a_fold"/>
</dbReference>
<dbReference type="NCBIfam" id="TIGR00032">
    <property type="entry name" value="argG"/>
    <property type="match status" value="1"/>
</dbReference>
<dbReference type="NCBIfam" id="NF001770">
    <property type="entry name" value="PRK00509.1"/>
    <property type="match status" value="1"/>
</dbReference>
<dbReference type="PANTHER" id="PTHR11587">
    <property type="entry name" value="ARGININOSUCCINATE SYNTHASE"/>
    <property type="match status" value="1"/>
</dbReference>
<dbReference type="PANTHER" id="PTHR11587:SF2">
    <property type="entry name" value="ARGININOSUCCINATE SYNTHASE"/>
    <property type="match status" value="1"/>
</dbReference>
<dbReference type="Pfam" id="PF20979">
    <property type="entry name" value="Arginosuc_syn_C"/>
    <property type="match status" value="1"/>
</dbReference>
<dbReference type="Pfam" id="PF00764">
    <property type="entry name" value="Arginosuc_synth"/>
    <property type="match status" value="1"/>
</dbReference>
<dbReference type="SUPFAM" id="SSF52402">
    <property type="entry name" value="Adenine nucleotide alpha hydrolases-like"/>
    <property type="match status" value="1"/>
</dbReference>
<dbReference type="SUPFAM" id="SSF69864">
    <property type="entry name" value="Argininosuccinate synthetase, C-terminal domain"/>
    <property type="match status" value="1"/>
</dbReference>
<dbReference type="PROSITE" id="PS00564">
    <property type="entry name" value="ARGININOSUCCIN_SYN_1"/>
    <property type="match status" value="1"/>
</dbReference>
<dbReference type="PROSITE" id="PS00565">
    <property type="entry name" value="ARGININOSUCCIN_SYN_2"/>
    <property type="match status" value="1"/>
</dbReference>
<sequence length="404" mass="44744">MKPKHILLAYSGGLDTSTALHFLKRHFDCRVTAYCANLGQKEDWERMKRRAAIAGADELVIEDLRETFIGDFVFPALKANASYERDYLLGTPLARPAIVKGLIEYARKHDVDCLSHGCTQKGNDQVRFEMAAKILAPDLPTVAPWRIWSLQSREDLFAYCQQHGIPVESRPDNLLSHDENLVHITTEGDYLESVANAFDWRDANWITPPTQAPDAIETITLGFRRGVPVSVDGAALGPVELVERLNEAGARNGVGFQDIIENRINGLKVRGVFENPALTILHAAHRKLEKITLGRDVERLRNLVSDDYGDIVYRGLWFSDERLCLQALIDESQKYVSGDVKVQLYKGSCTPCAVESEQSLYSRELVTLHAGRAISGEDATGFLNTLGLRIGIEAARAGNTGAGA</sequence>
<reference key="1">
    <citation type="journal article" date="2004" name="Proc. Natl. Acad. Sci. U.S.A.">
        <title>Genomic plasticity of the causative agent of melioidosis, Burkholderia pseudomallei.</title>
        <authorList>
            <person name="Holden M.T.G."/>
            <person name="Titball R.W."/>
            <person name="Peacock S.J."/>
            <person name="Cerdeno-Tarraga A.-M."/>
            <person name="Atkins T."/>
            <person name="Crossman L.C."/>
            <person name="Pitt T."/>
            <person name="Churcher C."/>
            <person name="Mungall K.L."/>
            <person name="Bentley S.D."/>
            <person name="Sebaihia M."/>
            <person name="Thomson N.R."/>
            <person name="Bason N."/>
            <person name="Beacham I.R."/>
            <person name="Brooks K."/>
            <person name="Brown K.A."/>
            <person name="Brown N.F."/>
            <person name="Challis G.L."/>
            <person name="Cherevach I."/>
            <person name="Chillingworth T."/>
            <person name="Cronin A."/>
            <person name="Crossett B."/>
            <person name="Davis P."/>
            <person name="DeShazer D."/>
            <person name="Feltwell T."/>
            <person name="Fraser A."/>
            <person name="Hance Z."/>
            <person name="Hauser H."/>
            <person name="Holroyd S."/>
            <person name="Jagels K."/>
            <person name="Keith K.E."/>
            <person name="Maddison M."/>
            <person name="Moule S."/>
            <person name="Price C."/>
            <person name="Quail M.A."/>
            <person name="Rabbinowitsch E."/>
            <person name="Rutherford K."/>
            <person name="Sanders M."/>
            <person name="Simmonds M."/>
            <person name="Songsivilai S."/>
            <person name="Stevens K."/>
            <person name="Tumapa S."/>
            <person name="Vesaratchavest M."/>
            <person name="Whitehead S."/>
            <person name="Yeats C."/>
            <person name="Barrell B.G."/>
            <person name="Oyston P.C.F."/>
            <person name="Parkhill J."/>
        </authorList>
    </citation>
    <scope>NUCLEOTIDE SEQUENCE [LARGE SCALE GENOMIC DNA]</scope>
    <source>
        <strain>K96243</strain>
    </source>
</reference>
<protein>
    <recommendedName>
        <fullName evidence="1">Argininosuccinate synthase</fullName>
        <ecNumber evidence="1">6.3.4.5</ecNumber>
    </recommendedName>
    <alternativeName>
        <fullName evidence="1">Citrulline--aspartate ligase</fullName>
    </alternativeName>
</protein>
<feature type="chain" id="PRO_0000148579" description="Argininosuccinate synthase">
    <location>
        <begin position="1"/>
        <end position="404"/>
    </location>
</feature>
<feature type="binding site" evidence="1">
    <location>
        <begin position="9"/>
        <end position="17"/>
    </location>
    <ligand>
        <name>ATP</name>
        <dbReference type="ChEBI" id="CHEBI:30616"/>
    </ligand>
</feature>
<feature type="binding site" evidence="1">
    <location>
        <position position="36"/>
    </location>
    <ligand>
        <name>ATP</name>
        <dbReference type="ChEBI" id="CHEBI:30616"/>
    </ligand>
</feature>
<feature type="binding site" evidence="1">
    <location>
        <position position="87"/>
    </location>
    <ligand>
        <name>L-citrulline</name>
        <dbReference type="ChEBI" id="CHEBI:57743"/>
    </ligand>
</feature>
<feature type="binding site" evidence="1">
    <location>
        <position position="117"/>
    </location>
    <ligand>
        <name>ATP</name>
        <dbReference type="ChEBI" id="CHEBI:30616"/>
    </ligand>
</feature>
<feature type="binding site" evidence="1">
    <location>
        <position position="119"/>
    </location>
    <ligand>
        <name>L-aspartate</name>
        <dbReference type="ChEBI" id="CHEBI:29991"/>
    </ligand>
</feature>
<feature type="binding site" evidence="1">
    <location>
        <position position="123"/>
    </location>
    <ligand>
        <name>L-aspartate</name>
        <dbReference type="ChEBI" id="CHEBI:29991"/>
    </ligand>
</feature>
<feature type="binding site" evidence="1">
    <location>
        <position position="123"/>
    </location>
    <ligand>
        <name>L-citrulline</name>
        <dbReference type="ChEBI" id="CHEBI:57743"/>
    </ligand>
</feature>
<feature type="binding site" evidence="1">
    <location>
        <position position="124"/>
    </location>
    <ligand>
        <name>L-aspartate</name>
        <dbReference type="ChEBI" id="CHEBI:29991"/>
    </ligand>
</feature>
<feature type="binding site" evidence="1">
    <location>
        <position position="127"/>
    </location>
    <ligand>
        <name>L-citrulline</name>
        <dbReference type="ChEBI" id="CHEBI:57743"/>
    </ligand>
</feature>
<feature type="binding site" evidence="1">
    <location>
        <position position="176"/>
    </location>
    <ligand>
        <name>L-citrulline</name>
        <dbReference type="ChEBI" id="CHEBI:57743"/>
    </ligand>
</feature>
<feature type="binding site" evidence="1">
    <location>
        <position position="261"/>
    </location>
    <ligand>
        <name>L-citrulline</name>
        <dbReference type="ChEBI" id="CHEBI:57743"/>
    </ligand>
</feature>
<keyword id="KW-0028">Amino-acid biosynthesis</keyword>
<keyword id="KW-0055">Arginine biosynthesis</keyword>
<keyword id="KW-0067">ATP-binding</keyword>
<keyword id="KW-0963">Cytoplasm</keyword>
<keyword id="KW-0436">Ligase</keyword>
<keyword id="KW-0547">Nucleotide-binding</keyword>
<keyword id="KW-1185">Reference proteome</keyword>
<gene>
    <name evidence="1" type="primary">argG</name>
    <name type="ordered locus">BPSL1721</name>
</gene>
<accession>Q63U95</accession>
<name>ASSY_BURPS</name>
<comment type="catalytic activity">
    <reaction evidence="1">
        <text>L-citrulline + L-aspartate + ATP = 2-(N(omega)-L-arginino)succinate + AMP + diphosphate + H(+)</text>
        <dbReference type="Rhea" id="RHEA:10932"/>
        <dbReference type="ChEBI" id="CHEBI:15378"/>
        <dbReference type="ChEBI" id="CHEBI:29991"/>
        <dbReference type="ChEBI" id="CHEBI:30616"/>
        <dbReference type="ChEBI" id="CHEBI:33019"/>
        <dbReference type="ChEBI" id="CHEBI:57472"/>
        <dbReference type="ChEBI" id="CHEBI:57743"/>
        <dbReference type="ChEBI" id="CHEBI:456215"/>
        <dbReference type="EC" id="6.3.4.5"/>
    </reaction>
</comment>
<comment type="pathway">
    <text evidence="1">Amino-acid biosynthesis; L-arginine biosynthesis; L-arginine from L-ornithine and carbamoyl phosphate: step 2/3.</text>
</comment>
<comment type="subunit">
    <text evidence="1">Homotetramer.</text>
</comment>
<comment type="subcellular location">
    <subcellularLocation>
        <location evidence="1">Cytoplasm</location>
    </subcellularLocation>
</comment>
<comment type="similarity">
    <text evidence="1">Belongs to the argininosuccinate synthase family. Type 1 subfamily.</text>
</comment>
<proteinExistence type="inferred from homology"/>
<organism>
    <name type="scientific">Burkholderia pseudomallei (strain K96243)</name>
    <dbReference type="NCBI Taxonomy" id="272560"/>
    <lineage>
        <taxon>Bacteria</taxon>
        <taxon>Pseudomonadati</taxon>
        <taxon>Pseudomonadota</taxon>
        <taxon>Betaproteobacteria</taxon>
        <taxon>Burkholderiales</taxon>
        <taxon>Burkholderiaceae</taxon>
        <taxon>Burkholderia</taxon>
        <taxon>pseudomallei group</taxon>
    </lineage>
</organism>
<evidence type="ECO:0000255" key="1">
    <source>
        <dbReference type="HAMAP-Rule" id="MF_00005"/>
    </source>
</evidence>